<protein>
    <recommendedName>
        <fullName evidence="1">Protein N-terminal and lysine N-methyltransferase EFM7</fullName>
        <ecNumber evidence="1">2.1.1.-</ecNumber>
    </recommendedName>
    <alternativeName>
        <fullName evidence="1">Elongation factor methyltransferase 7</fullName>
    </alternativeName>
</protein>
<proteinExistence type="inferred from homology"/>
<reference key="1">
    <citation type="journal article" date="2007" name="Science">
        <title>The Fusarium graminearum genome reveals a link between localized polymorphism and pathogen specialization.</title>
        <authorList>
            <person name="Cuomo C.A."/>
            <person name="Gueldener U."/>
            <person name="Xu J.-R."/>
            <person name="Trail F."/>
            <person name="Turgeon B.G."/>
            <person name="Di Pietro A."/>
            <person name="Walton J.D."/>
            <person name="Ma L.-J."/>
            <person name="Baker S.E."/>
            <person name="Rep M."/>
            <person name="Adam G."/>
            <person name="Antoniw J."/>
            <person name="Baldwin T."/>
            <person name="Calvo S.E."/>
            <person name="Chang Y.-L."/>
            <person name="DeCaprio D."/>
            <person name="Gale L.R."/>
            <person name="Gnerre S."/>
            <person name="Goswami R.S."/>
            <person name="Hammond-Kosack K."/>
            <person name="Harris L.J."/>
            <person name="Hilburn K."/>
            <person name="Kennell J.C."/>
            <person name="Kroken S."/>
            <person name="Magnuson J.K."/>
            <person name="Mannhaupt G."/>
            <person name="Mauceli E.W."/>
            <person name="Mewes H.-W."/>
            <person name="Mitterbauer R."/>
            <person name="Muehlbauer G."/>
            <person name="Muensterkoetter M."/>
            <person name="Nelson D."/>
            <person name="O'Donnell K."/>
            <person name="Ouellet T."/>
            <person name="Qi W."/>
            <person name="Quesneville H."/>
            <person name="Roncero M.I.G."/>
            <person name="Seong K.-Y."/>
            <person name="Tetko I.V."/>
            <person name="Urban M."/>
            <person name="Waalwijk C."/>
            <person name="Ward T.J."/>
            <person name="Yao J."/>
            <person name="Birren B.W."/>
            <person name="Kistler H.C."/>
        </authorList>
    </citation>
    <scope>NUCLEOTIDE SEQUENCE [LARGE SCALE GENOMIC DNA]</scope>
    <source>
        <strain>ATCC MYA-4620 / CBS 123657 / FGSC 9075 / NRRL 31084 / PH-1</strain>
    </source>
</reference>
<reference key="2">
    <citation type="journal article" date="2010" name="Nature">
        <title>Comparative genomics reveals mobile pathogenicity chromosomes in Fusarium.</title>
        <authorList>
            <person name="Ma L.-J."/>
            <person name="van der Does H.C."/>
            <person name="Borkovich K.A."/>
            <person name="Coleman J.J."/>
            <person name="Daboussi M.-J."/>
            <person name="Di Pietro A."/>
            <person name="Dufresne M."/>
            <person name="Freitag M."/>
            <person name="Grabherr M."/>
            <person name="Henrissat B."/>
            <person name="Houterman P.M."/>
            <person name="Kang S."/>
            <person name="Shim W.-B."/>
            <person name="Woloshuk C."/>
            <person name="Xie X."/>
            <person name="Xu J.-R."/>
            <person name="Antoniw J."/>
            <person name="Baker S.E."/>
            <person name="Bluhm B.H."/>
            <person name="Breakspear A."/>
            <person name="Brown D.W."/>
            <person name="Butchko R.A.E."/>
            <person name="Chapman S."/>
            <person name="Coulson R."/>
            <person name="Coutinho P.M."/>
            <person name="Danchin E.G.J."/>
            <person name="Diener A."/>
            <person name="Gale L.R."/>
            <person name="Gardiner D.M."/>
            <person name="Goff S."/>
            <person name="Hammond-Kosack K.E."/>
            <person name="Hilburn K."/>
            <person name="Hua-Van A."/>
            <person name="Jonkers W."/>
            <person name="Kazan K."/>
            <person name="Kodira C.D."/>
            <person name="Koehrsen M."/>
            <person name="Kumar L."/>
            <person name="Lee Y.-H."/>
            <person name="Li L."/>
            <person name="Manners J.M."/>
            <person name="Miranda-Saavedra D."/>
            <person name="Mukherjee M."/>
            <person name="Park G."/>
            <person name="Park J."/>
            <person name="Park S.-Y."/>
            <person name="Proctor R.H."/>
            <person name="Regev A."/>
            <person name="Ruiz-Roldan M.C."/>
            <person name="Sain D."/>
            <person name="Sakthikumar S."/>
            <person name="Sykes S."/>
            <person name="Schwartz D.C."/>
            <person name="Turgeon B.G."/>
            <person name="Wapinski I."/>
            <person name="Yoder O."/>
            <person name="Young S."/>
            <person name="Zeng Q."/>
            <person name="Zhou S."/>
            <person name="Galagan J."/>
            <person name="Cuomo C.A."/>
            <person name="Kistler H.C."/>
            <person name="Rep M."/>
        </authorList>
    </citation>
    <scope>GENOME REANNOTATION</scope>
    <source>
        <strain>ATCC MYA-4620 / CBS 123657 / FGSC 9075 / NRRL 31084 / PH-1</strain>
    </source>
</reference>
<reference key="3">
    <citation type="journal article" date="2015" name="BMC Genomics">
        <title>The completed genome sequence of the pathogenic ascomycete fungus Fusarium graminearum.</title>
        <authorList>
            <person name="King R."/>
            <person name="Urban M."/>
            <person name="Hammond-Kosack M.C.U."/>
            <person name="Hassani-Pak K."/>
            <person name="Hammond-Kosack K.E."/>
        </authorList>
    </citation>
    <scope>NUCLEOTIDE SEQUENCE [LARGE SCALE GENOMIC DNA]</scope>
    <source>
        <strain>ATCC MYA-4620 / CBS 123657 / FGSC 9075 / NRRL 31084 / PH-1</strain>
    </source>
</reference>
<organism>
    <name type="scientific">Gibberella zeae (strain ATCC MYA-4620 / CBS 123657 / FGSC 9075 / NRRL 31084 / PH-1)</name>
    <name type="common">Wheat head blight fungus</name>
    <name type="synonym">Fusarium graminearum</name>
    <dbReference type="NCBI Taxonomy" id="229533"/>
    <lineage>
        <taxon>Eukaryota</taxon>
        <taxon>Fungi</taxon>
        <taxon>Dikarya</taxon>
        <taxon>Ascomycota</taxon>
        <taxon>Pezizomycotina</taxon>
        <taxon>Sordariomycetes</taxon>
        <taxon>Hypocreomycetidae</taxon>
        <taxon>Hypocreales</taxon>
        <taxon>Nectriaceae</taxon>
        <taxon>Fusarium</taxon>
    </lineage>
</organism>
<evidence type="ECO:0000255" key="1">
    <source>
        <dbReference type="HAMAP-Rule" id="MF_03223"/>
    </source>
</evidence>
<feature type="chain" id="PRO_0000096896" description="Protein N-terminal and lysine N-methyltransferase EFM7">
    <location>
        <begin position="1"/>
        <end position="265"/>
    </location>
</feature>
<feature type="binding site" evidence="1">
    <location>
        <position position="55"/>
    </location>
    <ligand>
        <name>S-adenosyl-L-methionine</name>
        <dbReference type="ChEBI" id="CHEBI:59789"/>
    </ligand>
</feature>
<feature type="binding site" evidence="1">
    <location>
        <begin position="81"/>
        <end position="83"/>
    </location>
    <ligand>
        <name>S-adenosyl-L-methionine</name>
        <dbReference type="ChEBI" id="CHEBI:59789"/>
    </ligand>
</feature>
<feature type="binding site" evidence="1">
    <location>
        <position position="103"/>
    </location>
    <ligand>
        <name>S-adenosyl-L-methionine</name>
        <dbReference type="ChEBI" id="CHEBI:59789"/>
    </ligand>
</feature>
<feature type="binding site" evidence="1">
    <location>
        <position position="141"/>
    </location>
    <ligand>
        <name>S-adenosyl-L-methionine</name>
        <dbReference type="ChEBI" id="CHEBI:59789"/>
    </ligand>
</feature>
<feature type="binding site" evidence="1">
    <location>
        <position position="169"/>
    </location>
    <ligand>
        <name>S-adenosyl-L-methionine</name>
        <dbReference type="ChEBI" id="CHEBI:59789"/>
    </ligand>
</feature>
<sequence length="265" mass="29613">MSGEVDYGFGDLMDDPEDYCPPTPPPTSQVFTMQSGKPITLHLVGASPTEAHHLWNGAKMIADFFEEDLSRVKGKTVLELGAAAGLPSLVAAILGAHKVVVTDYPDPDIIRIMQKNVDECDETVEPRGRIVDTVDAMGFVWGADSVPLLARLNPTDDSHKERFDILILADLLFRHSEHGNMVKTIKETLKISRESVAYVFFTSYRPWKKELDMGFFDIAREQGFEVEQIAERRLDKPLFENDPGDLDVQKTVKGFAVRWSAEACN</sequence>
<dbReference type="EC" id="2.1.1.-" evidence="1"/>
<dbReference type="EMBL" id="DS231667">
    <property type="protein sequence ID" value="ESU14916.1"/>
    <property type="molecule type" value="Genomic_DNA"/>
</dbReference>
<dbReference type="EMBL" id="HG970333">
    <property type="protein sequence ID" value="CEF76775.1"/>
    <property type="molecule type" value="Genomic_DNA"/>
</dbReference>
<dbReference type="RefSeq" id="XP_011320341.1">
    <property type="nucleotide sequence ID" value="XM_011322039.1"/>
</dbReference>
<dbReference type="SMR" id="Q4I2X5"/>
<dbReference type="FunCoup" id="Q4I2X5">
    <property type="interactions" value="142"/>
</dbReference>
<dbReference type="STRING" id="229533.Q4I2X5"/>
<dbReference type="GeneID" id="23560177"/>
<dbReference type="KEGG" id="fgr:FGSG_13370"/>
<dbReference type="VEuPathDB" id="FungiDB:FGRAMPH1_01G09945"/>
<dbReference type="eggNOG" id="KOG2920">
    <property type="taxonomic scope" value="Eukaryota"/>
</dbReference>
<dbReference type="HOGENOM" id="CLU_032409_0_0_1"/>
<dbReference type="InParanoid" id="Q4I2X5"/>
<dbReference type="OrthoDB" id="17592at110618"/>
<dbReference type="Proteomes" id="UP000070720">
    <property type="component" value="Chromosome 2"/>
</dbReference>
<dbReference type="GO" id="GO:0005737">
    <property type="term" value="C:cytoplasm"/>
    <property type="evidence" value="ECO:0007669"/>
    <property type="project" value="UniProtKB-SubCell"/>
</dbReference>
<dbReference type="GO" id="GO:0071885">
    <property type="term" value="F:N-terminal protein N-methyltransferase activity"/>
    <property type="evidence" value="ECO:0007669"/>
    <property type="project" value="UniProtKB-UniRule"/>
</dbReference>
<dbReference type="GO" id="GO:0016279">
    <property type="term" value="F:protein-lysine N-methyltransferase activity"/>
    <property type="evidence" value="ECO:0007669"/>
    <property type="project" value="UniProtKB-UniRule"/>
</dbReference>
<dbReference type="GO" id="GO:0032259">
    <property type="term" value="P:methylation"/>
    <property type="evidence" value="ECO:0007669"/>
    <property type="project" value="UniProtKB-KW"/>
</dbReference>
<dbReference type="CDD" id="cd02440">
    <property type="entry name" value="AdoMet_MTases"/>
    <property type="match status" value="1"/>
</dbReference>
<dbReference type="Gene3D" id="3.40.50.150">
    <property type="entry name" value="Vaccinia Virus protein VP39"/>
    <property type="match status" value="1"/>
</dbReference>
<dbReference type="HAMAP" id="MF_03223">
    <property type="entry name" value="Methyltr_EFM7"/>
    <property type="match status" value="1"/>
</dbReference>
<dbReference type="InterPro" id="IPR025784">
    <property type="entry name" value="EFM7"/>
</dbReference>
<dbReference type="InterPro" id="IPR019410">
    <property type="entry name" value="Methyltransf_16"/>
</dbReference>
<dbReference type="InterPro" id="IPR029063">
    <property type="entry name" value="SAM-dependent_MTases_sf"/>
</dbReference>
<dbReference type="PANTHER" id="PTHR14614">
    <property type="entry name" value="HEPATOCELLULAR CARCINOMA-ASSOCIATED ANTIGEN"/>
    <property type="match status" value="1"/>
</dbReference>
<dbReference type="PANTHER" id="PTHR14614:SF10">
    <property type="entry name" value="PROTEIN N-TERMINAL AND LYSINE N-METHYLTRANSFERASE EFM7"/>
    <property type="match status" value="1"/>
</dbReference>
<dbReference type="Pfam" id="PF10294">
    <property type="entry name" value="Methyltransf_16"/>
    <property type="match status" value="1"/>
</dbReference>
<dbReference type="SUPFAM" id="SSF53335">
    <property type="entry name" value="S-adenosyl-L-methionine-dependent methyltransferases"/>
    <property type="match status" value="1"/>
</dbReference>
<dbReference type="PROSITE" id="PS51560">
    <property type="entry name" value="SAM_MT_NNT1"/>
    <property type="match status" value="1"/>
</dbReference>
<name>EFM7_GIBZE</name>
<comment type="function">
    <text evidence="1">S-adenosyl-L-methionine-dependent protein methyltransferase that trimethylates the N-terminal glycine 'Gly-2' of elongation factor 1-alpha, before also catalyzing the mono- and dimethylation of 'Lys-3'.</text>
</comment>
<comment type="subcellular location">
    <subcellularLocation>
        <location evidence="1">Cytoplasm</location>
    </subcellularLocation>
</comment>
<comment type="similarity">
    <text evidence="1">Belongs to the class I-like SAM-binding methyltransferase superfamily. EFM7 family.</text>
</comment>
<accession>Q4I2X5</accession>
<accession>A0A098DEA4</accession>
<accession>A0A0E0RZV0</accession>
<accession>I1S940</accession>
<accession>V6RKC6</accession>
<gene>
    <name evidence="1" type="primary">EFM7</name>
    <name type="synonym">NNT1</name>
    <name type="ORF">FGRRES_13370</name>
    <name type="ORF">FGSG_13370</name>
</gene>
<keyword id="KW-0963">Cytoplasm</keyword>
<keyword id="KW-0489">Methyltransferase</keyword>
<keyword id="KW-1185">Reference proteome</keyword>
<keyword id="KW-0949">S-adenosyl-L-methionine</keyword>
<keyword id="KW-0808">Transferase</keyword>